<accession>A7GJW3</accession>
<sequence>MKLIVGLGNPGREYELTRHNIGFMAIDELAKRWNISLNEQKFKGMFGAGFVNGEKVILLKPLTYMNLSGESIRPLMDYYKIDLEDFIIMYDDLDLPVGKLRLRMKGSAGGHNGVKSTIAHLGTQEFQRIRMGIDRPKNGMKVVDYVLGRFTAEEMVDVNHAIEKAANACEEWLNKSFLQVMNDFNN</sequence>
<dbReference type="EC" id="3.1.1.29" evidence="1"/>
<dbReference type="EMBL" id="CP000764">
    <property type="protein sequence ID" value="ABS20421.1"/>
    <property type="molecule type" value="Genomic_DNA"/>
</dbReference>
<dbReference type="RefSeq" id="WP_011983190.1">
    <property type="nucleotide sequence ID" value="NC_009674.1"/>
</dbReference>
<dbReference type="SMR" id="A7GJW3"/>
<dbReference type="STRING" id="315749.Bcer98_0046"/>
<dbReference type="GeneID" id="33895350"/>
<dbReference type="KEGG" id="bcy:Bcer98_0046"/>
<dbReference type="eggNOG" id="COG0193">
    <property type="taxonomic scope" value="Bacteria"/>
</dbReference>
<dbReference type="HOGENOM" id="CLU_062456_4_1_9"/>
<dbReference type="OrthoDB" id="9800507at2"/>
<dbReference type="Proteomes" id="UP000002300">
    <property type="component" value="Chromosome"/>
</dbReference>
<dbReference type="GO" id="GO:0005737">
    <property type="term" value="C:cytoplasm"/>
    <property type="evidence" value="ECO:0007669"/>
    <property type="project" value="UniProtKB-SubCell"/>
</dbReference>
<dbReference type="GO" id="GO:0004045">
    <property type="term" value="F:peptidyl-tRNA hydrolase activity"/>
    <property type="evidence" value="ECO:0007669"/>
    <property type="project" value="UniProtKB-UniRule"/>
</dbReference>
<dbReference type="GO" id="GO:0000049">
    <property type="term" value="F:tRNA binding"/>
    <property type="evidence" value="ECO:0007669"/>
    <property type="project" value="UniProtKB-UniRule"/>
</dbReference>
<dbReference type="GO" id="GO:0006515">
    <property type="term" value="P:protein quality control for misfolded or incompletely synthesized proteins"/>
    <property type="evidence" value="ECO:0007669"/>
    <property type="project" value="UniProtKB-UniRule"/>
</dbReference>
<dbReference type="GO" id="GO:0072344">
    <property type="term" value="P:rescue of stalled ribosome"/>
    <property type="evidence" value="ECO:0007669"/>
    <property type="project" value="UniProtKB-UniRule"/>
</dbReference>
<dbReference type="CDD" id="cd00462">
    <property type="entry name" value="PTH"/>
    <property type="match status" value="1"/>
</dbReference>
<dbReference type="FunFam" id="3.40.50.1470:FF:000001">
    <property type="entry name" value="Peptidyl-tRNA hydrolase"/>
    <property type="match status" value="1"/>
</dbReference>
<dbReference type="Gene3D" id="3.40.50.1470">
    <property type="entry name" value="Peptidyl-tRNA hydrolase"/>
    <property type="match status" value="1"/>
</dbReference>
<dbReference type="HAMAP" id="MF_00083">
    <property type="entry name" value="Pept_tRNA_hydro_bact"/>
    <property type="match status" value="1"/>
</dbReference>
<dbReference type="InterPro" id="IPR001328">
    <property type="entry name" value="Pept_tRNA_hydro"/>
</dbReference>
<dbReference type="InterPro" id="IPR018171">
    <property type="entry name" value="Pept_tRNA_hydro_CS"/>
</dbReference>
<dbReference type="InterPro" id="IPR036416">
    <property type="entry name" value="Pept_tRNA_hydro_sf"/>
</dbReference>
<dbReference type="NCBIfam" id="TIGR00447">
    <property type="entry name" value="pth"/>
    <property type="match status" value="1"/>
</dbReference>
<dbReference type="PANTHER" id="PTHR17224">
    <property type="entry name" value="PEPTIDYL-TRNA HYDROLASE"/>
    <property type="match status" value="1"/>
</dbReference>
<dbReference type="PANTHER" id="PTHR17224:SF1">
    <property type="entry name" value="PEPTIDYL-TRNA HYDROLASE"/>
    <property type="match status" value="1"/>
</dbReference>
<dbReference type="Pfam" id="PF01195">
    <property type="entry name" value="Pept_tRNA_hydro"/>
    <property type="match status" value="1"/>
</dbReference>
<dbReference type="SUPFAM" id="SSF53178">
    <property type="entry name" value="Peptidyl-tRNA hydrolase-like"/>
    <property type="match status" value="1"/>
</dbReference>
<dbReference type="PROSITE" id="PS01195">
    <property type="entry name" value="PEPT_TRNA_HYDROL_1"/>
    <property type="match status" value="1"/>
</dbReference>
<dbReference type="PROSITE" id="PS01196">
    <property type="entry name" value="PEPT_TRNA_HYDROL_2"/>
    <property type="match status" value="1"/>
</dbReference>
<comment type="function">
    <text evidence="1">Hydrolyzes ribosome-free peptidyl-tRNAs (with 1 or more amino acids incorporated), which drop off the ribosome during protein synthesis, or as a result of ribosome stalling.</text>
</comment>
<comment type="function">
    <text evidence="1">Catalyzes the release of premature peptidyl moieties from peptidyl-tRNA molecules trapped in stalled 50S ribosomal subunits, and thus maintains levels of free tRNAs and 50S ribosomes.</text>
</comment>
<comment type="catalytic activity">
    <reaction evidence="1">
        <text>an N-acyl-L-alpha-aminoacyl-tRNA + H2O = an N-acyl-L-amino acid + a tRNA + H(+)</text>
        <dbReference type="Rhea" id="RHEA:54448"/>
        <dbReference type="Rhea" id="RHEA-COMP:10123"/>
        <dbReference type="Rhea" id="RHEA-COMP:13883"/>
        <dbReference type="ChEBI" id="CHEBI:15377"/>
        <dbReference type="ChEBI" id="CHEBI:15378"/>
        <dbReference type="ChEBI" id="CHEBI:59874"/>
        <dbReference type="ChEBI" id="CHEBI:78442"/>
        <dbReference type="ChEBI" id="CHEBI:138191"/>
        <dbReference type="EC" id="3.1.1.29"/>
    </reaction>
</comment>
<comment type="subunit">
    <text evidence="1">Monomer.</text>
</comment>
<comment type="subcellular location">
    <subcellularLocation>
        <location evidence="1">Cytoplasm</location>
    </subcellularLocation>
</comment>
<comment type="similarity">
    <text evidence="1">Belongs to the PTH family.</text>
</comment>
<reference key="1">
    <citation type="journal article" date="2008" name="Chem. Biol. Interact.">
        <title>Extending the Bacillus cereus group genomics to putative food-borne pathogens of different toxicity.</title>
        <authorList>
            <person name="Lapidus A."/>
            <person name="Goltsman E."/>
            <person name="Auger S."/>
            <person name="Galleron N."/>
            <person name="Segurens B."/>
            <person name="Dossat C."/>
            <person name="Land M.L."/>
            <person name="Broussolle V."/>
            <person name="Brillard J."/>
            <person name="Guinebretiere M.-H."/>
            <person name="Sanchis V."/>
            <person name="Nguen-the C."/>
            <person name="Lereclus D."/>
            <person name="Richardson P."/>
            <person name="Wincker P."/>
            <person name="Weissenbach J."/>
            <person name="Ehrlich S.D."/>
            <person name="Sorokin A."/>
        </authorList>
    </citation>
    <scope>NUCLEOTIDE SEQUENCE [LARGE SCALE GENOMIC DNA]</scope>
    <source>
        <strain>DSM 22905 / CIP 110041 / 391-98 / NVH 391-98</strain>
    </source>
</reference>
<evidence type="ECO:0000255" key="1">
    <source>
        <dbReference type="HAMAP-Rule" id="MF_00083"/>
    </source>
</evidence>
<organism>
    <name type="scientific">Bacillus cytotoxicus (strain DSM 22905 / CIP 110041 / 391-98 / NVH 391-98)</name>
    <dbReference type="NCBI Taxonomy" id="315749"/>
    <lineage>
        <taxon>Bacteria</taxon>
        <taxon>Bacillati</taxon>
        <taxon>Bacillota</taxon>
        <taxon>Bacilli</taxon>
        <taxon>Bacillales</taxon>
        <taxon>Bacillaceae</taxon>
        <taxon>Bacillus</taxon>
        <taxon>Bacillus cereus group</taxon>
    </lineage>
</organism>
<protein>
    <recommendedName>
        <fullName evidence="1">Peptidyl-tRNA hydrolase</fullName>
        <shortName evidence="1">Pth</shortName>
        <ecNumber evidence="1">3.1.1.29</ecNumber>
    </recommendedName>
</protein>
<name>PTH_BACCN</name>
<gene>
    <name evidence="1" type="primary">pth</name>
    <name type="ordered locus">Bcer98_0046</name>
</gene>
<keyword id="KW-0963">Cytoplasm</keyword>
<keyword id="KW-0378">Hydrolase</keyword>
<keyword id="KW-0694">RNA-binding</keyword>
<keyword id="KW-0820">tRNA-binding</keyword>
<feature type="chain" id="PRO_1000075328" description="Peptidyl-tRNA hydrolase">
    <location>
        <begin position="1"/>
        <end position="186"/>
    </location>
</feature>
<feature type="active site" description="Proton acceptor" evidence="1">
    <location>
        <position position="19"/>
    </location>
</feature>
<feature type="binding site" evidence="1">
    <location>
        <position position="14"/>
    </location>
    <ligand>
        <name>tRNA</name>
        <dbReference type="ChEBI" id="CHEBI:17843"/>
    </ligand>
</feature>
<feature type="binding site" evidence="1">
    <location>
        <position position="64"/>
    </location>
    <ligand>
        <name>tRNA</name>
        <dbReference type="ChEBI" id="CHEBI:17843"/>
    </ligand>
</feature>
<feature type="binding site" evidence="1">
    <location>
        <position position="66"/>
    </location>
    <ligand>
        <name>tRNA</name>
        <dbReference type="ChEBI" id="CHEBI:17843"/>
    </ligand>
</feature>
<feature type="binding site" evidence="1">
    <location>
        <position position="112"/>
    </location>
    <ligand>
        <name>tRNA</name>
        <dbReference type="ChEBI" id="CHEBI:17843"/>
    </ligand>
</feature>
<feature type="site" description="Discriminates between blocked and unblocked aminoacyl-tRNA" evidence="1">
    <location>
        <position position="9"/>
    </location>
</feature>
<feature type="site" description="Stabilizes the basic form of H active site to accept a proton" evidence="1">
    <location>
        <position position="91"/>
    </location>
</feature>
<proteinExistence type="inferred from homology"/>